<evidence type="ECO:0000255" key="1">
    <source>
        <dbReference type="HAMAP-Rule" id="MF_01232"/>
    </source>
</evidence>
<evidence type="ECO:0000256" key="2">
    <source>
        <dbReference type="SAM" id="MobiDB-lite"/>
    </source>
</evidence>
<proteinExistence type="inferred from homology"/>
<organism>
    <name type="scientific">Escherichia coli (strain 55989 / EAEC)</name>
    <dbReference type="NCBI Taxonomy" id="585055"/>
    <lineage>
        <taxon>Bacteria</taxon>
        <taxon>Pseudomonadati</taxon>
        <taxon>Pseudomonadota</taxon>
        <taxon>Gammaproteobacteria</taxon>
        <taxon>Enterobacterales</taxon>
        <taxon>Enterobacteriaceae</taxon>
        <taxon>Escherichia</taxon>
    </lineage>
</organism>
<dbReference type="EMBL" id="CU928145">
    <property type="protein sequence ID" value="CAU97812.1"/>
    <property type="molecule type" value="Genomic_DNA"/>
</dbReference>
<dbReference type="RefSeq" id="WP_000219686.1">
    <property type="nucleotide sequence ID" value="NC_011748.1"/>
</dbReference>
<dbReference type="SMR" id="B7L6Q9"/>
<dbReference type="KEGG" id="eck:EC55989_1953"/>
<dbReference type="HOGENOM" id="CLU_049702_0_0_6"/>
<dbReference type="Proteomes" id="UP000000746">
    <property type="component" value="Chromosome"/>
</dbReference>
<dbReference type="HAMAP" id="MF_01232">
    <property type="entry name" value="UPF0229"/>
    <property type="match status" value="1"/>
</dbReference>
<dbReference type="InterPro" id="IPR006698">
    <property type="entry name" value="UPF0229"/>
</dbReference>
<dbReference type="NCBIfam" id="NF003707">
    <property type="entry name" value="PRK05325.1-2"/>
    <property type="match status" value="1"/>
</dbReference>
<dbReference type="NCBIfam" id="NF003708">
    <property type="entry name" value="PRK05325.1-3"/>
    <property type="match status" value="1"/>
</dbReference>
<dbReference type="PANTHER" id="PTHR30510">
    <property type="entry name" value="UPF0229 PROTEIN YEAH"/>
    <property type="match status" value="1"/>
</dbReference>
<dbReference type="PANTHER" id="PTHR30510:SF2">
    <property type="entry name" value="UPF0229 PROTEIN YEAH"/>
    <property type="match status" value="1"/>
</dbReference>
<dbReference type="Pfam" id="PF04285">
    <property type="entry name" value="DUF444"/>
    <property type="match status" value="1"/>
</dbReference>
<comment type="similarity">
    <text evidence="1">Belongs to the UPF0229 family.</text>
</comment>
<gene>
    <name evidence="1" type="primary">yeaH</name>
    <name type="ordered locus">EC55989_1953</name>
</gene>
<protein>
    <recommendedName>
        <fullName evidence="1">UPF0229 protein YeaH</fullName>
    </recommendedName>
</protein>
<name>YEAH_ECO55</name>
<reference key="1">
    <citation type="journal article" date="2009" name="PLoS Genet.">
        <title>Organised genome dynamics in the Escherichia coli species results in highly diverse adaptive paths.</title>
        <authorList>
            <person name="Touchon M."/>
            <person name="Hoede C."/>
            <person name="Tenaillon O."/>
            <person name="Barbe V."/>
            <person name="Baeriswyl S."/>
            <person name="Bidet P."/>
            <person name="Bingen E."/>
            <person name="Bonacorsi S."/>
            <person name="Bouchier C."/>
            <person name="Bouvet O."/>
            <person name="Calteau A."/>
            <person name="Chiapello H."/>
            <person name="Clermont O."/>
            <person name="Cruveiller S."/>
            <person name="Danchin A."/>
            <person name="Diard M."/>
            <person name="Dossat C."/>
            <person name="Karoui M.E."/>
            <person name="Frapy E."/>
            <person name="Garry L."/>
            <person name="Ghigo J.M."/>
            <person name="Gilles A.M."/>
            <person name="Johnson J."/>
            <person name="Le Bouguenec C."/>
            <person name="Lescat M."/>
            <person name="Mangenot S."/>
            <person name="Martinez-Jehanne V."/>
            <person name="Matic I."/>
            <person name="Nassif X."/>
            <person name="Oztas S."/>
            <person name="Petit M.A."/>
            <person name="Pichon C."/>
            <person name="Rouy Z."/>
            <person name="Ruf C.S."/>
            <person name="Schneider D."/>
            <person name="Tourret J."/>
            <person name="Vacherie B."/>
            <person name="Vallenet D."/>
            <person name="Medigue C."/>
            <person name="Rocha E.P.C."/>
            <person name="Denamur E."/>
        </authorList>
    </citation>
    <scope>NUCLEOTIDE SEQUENCE [LARGE SCALE GENOMIC DNA]</scope>
    <source>
        <strain>55989 / EAEC</strain>
    </source>
</reference>
<keyword id="KW-1185">Reference proteome</keyword>
<accession>B7L6Q9</accession>
<feature type="chain" id="PRO_1000164980" description="UPF0229 protein YeaH">
    <location>
        <begin position="1"/>
        <end position="427"/>
    </location>
</feature>
<feature type="region of interest" description="Disordered" evidence="2">
    <location>
        <begin position="79"/>
        <end position="110"/>
    </location>
</feature>
<feature type="compositionally biased region" description="Basic and acidic residues" evidence="2">
    <location>
        <begin position="79"/>
        <end position="90"/>
    </location>
</feature>
<feature type="compositionally biased region" description="Gly residues" evidence="2">
    <location>
        <begin position="92"/>
        <end position="102"/>
    </location>
</feature>
<sequence length="427" mass="49450">MTWFIDRRLNGKNKSMVNRQRFLRRYKAQIKQSISEAINKRSVTDVDSGESVSIPTEDISEPMFHQGRGGLRHRVHPGNDHFVQNDRIERPQGGGGGSGSGQGQASQDGEGQDEFVFQISKDEYLDLLFEDLALPNLKQNQQRQLTEYKTHRAGYTANGVPANISVVRSLQNSLARRTAMTAGKRRELHALEENLAIISNSEPAQLLEEERLRKEIAELRAKIERVPFIDTFDLRYKNYEKRPDPSSQAVMFCLMDVSGSMDQSTKDMAKRFYILLYLFLSRTYKNVEVVYIRHHTQAKEVDEHEFFYSQETGGTIVSSALKLMDEVVKERYNPAQWNIYAAQASDGDNWADDSPLCHEILAKKLLPVVRYYSYIEITRRAHQTLWREYEHLQSTFDNFAMQHIRDQDDIYPVFRELFHKQNATAKD</sequence>